<protein>
    <recommendedName>
        <fullName evidence="1">Adenylate kinase</fullName>
        <ecNumber evidence="1">2.7.4.3</ecNumber>
    </recommendedName>
    <alternativeName>
        <fullName evidence="1">ATP-AMP transphosphorylase</fullName>
    </alternativeName>
    <alternativeName>
        <fullName evidence="1">ATP:AMP phosphotransferase</fullName>
    </alternativeName>
    <alternativeName>
        <fullName evidence="1">Adenylate kinase cytosolic and mitochondrial</fullName>
    </alternativeName>
    <alternativeName>
        <fullName evidence="1">Adenylate monophosphate kinase</fullName>
    </alternativeName>
</protein>
<accession>P0CO43</accession>
<accession>Q55KH8</accession>
<accession>Q5K931</accession>
<dbReference type="EC" id="2.7.4.3" evidence="1"/>
<dbReference type="EMBL" id="AAEY01000051">
    <property type="protein sequence ID" value="EAL18285.1"/>
    <property type="molecule type" value="Genomic_DNA"/>
</dbReference>
<dbReference type="RefSeq" id="XP_772932.1">
    <property type="nucleotide sequence ID" value="XM_767839.1"/>
</dbReference>
<dbReference type="SMR" id="P0CO43"/>
<dbReference type="EnsemblFungi" id="AAW46409">
    <property type="protein sequence ID" value="AAW46409"/>
    <property type="gene ID" value="CNK03420"/>
</dbReference>
<dbReference type="GeneID" id="4938696"/>
<dbReference type="KEGG" id="cnb:CNBK0080"/>
<dbReference type="VEuPathDB" id="FungiDB:CNBK0080"/>
<dbReference type="HOGENOM" id="CLU_032354_1_0_1"/>
<dbReference type="OrthoDB" id="4701at5206"/>
<dbReference type="GO" id="GO:0005829">
    <property type="term" value="C:cytosol"/>
    <property type="evidence" value="ECO:0007669"/>
    <property type="project" value="UniProtKB-SubCell"/>
</dbReference>
<dbReference type="GO" id="GO:0005758">
    <property type="term" value="C:mitochondrial intermembrane space"/>
    <property type="evidence" value="ECO:0007669"/>
    <property type="project" value="UniProtKB-SubCell"/>
</dbReference>
<dbReference type="GO" id="GO:0004017">
    <property type="term" value="F:adenylate kinase activity"/>
    <property type="evidence" value="ECO:0007669"/>
    <property type="project" value="UniProtKB-UniRule"/>
</dbReference>
<dbReference type="GO" id="GO:0016208">
    <property type="term" value="F:AMP binding"/>
    <property type="evidence" value="ECO:0007669"/>
    <property type="project" value="EnsemblFungi"/>
</dbReference>
<dbReference type="GO" id="GO:0005524">
    <property type="term" value="F:ATP binding"/>
    <property type="evidence" value="ECO:0007669"/>
    <property type="project" value="UniProtKB-KW"/>
</dbReference>
<dbReference type="GO" id="GO:0003688">
    <property type="term" value="F:DNA replication origin binding"/>
    <property type="evidence" value="ECO:0007669"/>
    <property type="project" value="EnsemblFungi"/>
</dbReference>
<dbReference type="GO" id="GO:0006172">
    <property type="term" value="P:ADP biosynthetic process"/>
    <property type="evidence" value="ECO:0007669"/>
    <property type="project" value="UniProtKB-UniRule"/>
</dbReference>
<dbReference type="GO" id="GO:0046033">
    <property type="term" value="P:AMP metabolic process"/>
    <property type="evidence" value="ECO:0007669"/>
    <property type="project" value="UniProtKB-UniRule"/>
</dbReference>
<dbReference type="GO" id="GO:0046034">
    <property type="term" value="P:ATP metabolic process"/>
    <property type="evidence" value="ECO:0007669"/>
    <property type="project" value="UniProtKB-UniRule"/>
</dbReference>
<dbReference type="GO" id="GO:0006270">
    <property type="term" value="P:DNA replication initiation"/>
    <property type="evidence" value="ECO:0007669"/>
    <property type="project" value="EnsemblFungi"/>
</dbReference>
<dbReference type="GO" id="GO:0036388">
    <property type="term" value="P:pre-replicative complex assembly"/>
    <property type="evidence" value="ECO:0007669"/>
    <property type="project" value="EnsemblFungi"/>
</dbReference>
<dbReference type="CDD" id="cd01428">
    <property type="entry name" value="ADK"/>
    <property type="match status" value="1"/>
</dbReference>
<dbReference type="FunFam" id="3.40.50.300:FF:000106">
    <property type="entry name" value="Adenylate kinase mitochondrial"/>
    <property type="match status" value="1"/>
</dbReference>
<dbReference type="Gene3D" id="3.40.50.300">
    <property type="entry name" value="P-loop containing nucleotide triphosphate hydrolases"/>
    <property type="match status" value="1"/>
</dbReference>
<dbReference type="HAMAP" id="MF_00235">
    <property type="entry name" value="Adenylate_kinase_Adk"/>
    <property type="match status" value="1"/>
</dbReference>
<dbReference type="HAMAP" id="MF_03168">
    <property type="entry name" value="Adenylate_kinase_AK2"/>
    <property type="match status" value="1"/>
</dbReference>
<dbReference type="InterPro" id="IPR006259">
    <property type="entry name" value="Adenyl_kin_sub"/>
</dbReference>
<dbReference type="InterPro" id="IPR000850">
    <property type="entry name" value="Adenylat/UMP-CMP_kin"/>
</dbReference>
<dbReference type="InterPro" id="IPR033690">
    <property type="entry name" value="Adenylat_kinase_CS"/>
</dbReference>
<dbReference type="InterPro" id="IPR007862">
    <property type="entry name" value="Adenylate_kinase_lid-dom"/>
</dbReference>
<dbReference type="InterPro" id="IPR028587">
    <property type="entry name" value="AK2"/>
</dbReference>
<dbReference type="InterPro" id="IPR027417">
    <property type="entry name" value="P-loop_NTPase"/>
</dbReference>
<dbReference type="NCBIfam" id="TIGR01351">
    <property type="entry name" value="adk"/>
    <property type="match status" value="1"/>
</dbReference>
<dbReference type="NCBIfam" id="NF001380">
    <property type="entry name" value="PRK00279.1-2"/>
    <property type="match status" value="1"/>
</dbReference>
<dbReference type="NCBIfam" id="NF001381">
    <property type="entry name" value="PRK00279.1-3"/>
    <property type="match status" value="1"/>
</dbReference>
<dbReference type="NCBIfam" id="NF011100">
    <property type="entry name" value="PRK14527.1"/>
    <property type="match status" value="1"/>
</dbReference>
<dbReference type="PANTHER" id="PTHR23359">
    <property type="entry name" value="NUCLEOTIDE KINASE"/>
    <property type="match status" value="1"/>
</dbReference>
<dbReference type="Pfam" id="PF00406">
    <property type="entry name" value="ADK"/>
    <property type="match status" value="1"/>
</dbReference>
<dbReference type="Pfam" id="PF05191">
    <property type="entry name" value="ADK_lid"/>
    <property type="match status" value="1"/>
</dbReference>
<dbReference type="PRINTS" id="PR00094">
    <property type="entry name" value="ADENYLTKNASE"/>
</dbReference>
<dbReference type="SUPFAM" id="SSF52540">
    <property type="entry name" value="P-loop containing nucleoside triphosphate hydrolases"/>
    <property type="match status" value="1"/>
</dbReference>
<dbReference type="PROSITE" id="PS00113">
    <property type="entry name" value="ADENYLATE_KINASE"/>
    <property type="match status" value="1"/>
</dbReference>
<proteinExistence type="inferred from homology"/>
<organism>
    <name type="scientific">Cryptococcus neoformans var. neoformans serotype D (strain B-3501A)</name>
    <name type="common">Filobasidiella neoformans</name>
    <dbReference type="NCBI Taxonomy" id="283643"/>
    <lineage>
        <taxon>Eukaryota</taxon>
        <taxon>Fungi</taxon>
        <taxon>Dikarya</taxon>
        <taxon>Basidiomycota</taxon>
        <taxon>Agaricomycotina</taxon>
        <taxon>Tremellomycetes</taxon>
        <taxon>Tremellales</taxon>
        <taxon>Cryptococcaceae</taxon>
        <taxon>Cryptococcus</taxon>
        <taxon>Cryptococcus neoformans species complex</taxon>
    </lineage>
</organism>
<evidence type="ECO:0000255" key="1">
    <source>
        <dbReference type="HAMAP-Rule" id="MF_03168"/>
    </source>
</evidence>
<gene>
    <name evidence="1" type="primary">ADK1</name>
    <name type="ordered locus">CNBK0080</name>
</gene>
<name>KAD2_CRYNB</name>
<comment type="function">
    <text evidence="1">Catalyzes the reversible transfer of the terminal phosphate group between ATP and AMP. Plays an important role in cellular energy homeostasis and in adenine nucleotide metabolism. Adenylate kinase activity is critical for regulation of the phosphate utilization and the AMP de novo biosynthesis pathways.</text>
</comment>
<comment type="catalytic activity">
    <reaction evidence="1">
        <text>AMP + ATP = 2 ADP</text>
        <dbReference type="Rhea" id="RHEA:12973"/>
        <dbReference type="ChEBI" id="CHEBI:30616"/>
        <dbReference type="ChEBI" id="CHEBI:456215"/>
        <dbReference type="ChEBI" id="CHEBI:456216"/>
        <dbReference type="EC" id="2.7.4.3"/>
    </reaction>
</comment>
<comment type="subunit">
    <text evidence="1">Monomer.</text>
</comment>
<comment type="subcellular location">
    <subcellularLocation>
        <location evidence="1">Cytoplasm</location>
        <location evidence="1">Cytosol</location>
    </subcellularLocation>
    <subcellularLocation>
        <location evidence="1">Mitochondrion intermembrane space</location>
    </subcellularLocation>
    <text evidence="1">Predominantly mitochondrial.</text>
</comment>
<comment type="domain">
    <text evidence="1">Consists of three domains, a large central CORE domain and two small peripheral domains, NMPbind and LID, which undergo movements during catalysis. The LID domain closes over the site of phosphoryl transfer upon ATP binding. Assembling and dissambling the active center during each catalytic cycle provides an effective means to prevent ATP hydrolysis.</text>
</comment>
<comment type="similarity">
    <text evidence="1">Belongs to the adenylate kinase family. AK2 subfamily.</text>
</comment>
<feature type="chain" id="PRO_0000410126" description="Adenylate kinase">
    <location>
        <begin position="1"/>
        <end position="269"/>
    </location>
</feature>
<feature type="region of interest" description="NMP" evidence="1">
    <location>
        <begin position="81"/>
        <end position="110"/>
    </location>
</feature>
<feature type="region of interest" description="LID" evidence="1">
    <location>
        <begin position="178"/>
        <end position="215"/>
    </location>
</feature>
<feature type="binding site" evidence="1">
    <location>
        <begin position="61"/>
        <end position="66"/>
    </location>
    <ligand>
        <name>ATP</name>
        <dbReference type="ChEBI" id="CHEBI:30616"/>
    </ligand>
</feature>
<feature type="binding site" evidence="1">
    <location>
        <position position="82"/>
    </location>
    <ligand>
        <name>AMP</name>
        <dbReference type="ChEBI" id="CHEBI:456215"/>
    </ligand>
</feature>
<feature type="binding site" evidence="1">
    <location>
        <position position="87"/>
    </location>
    <ligand>
        <name>AMP</name>
        <dbReference type="ChEBI" id="CHEBI:456215"/>
    </ligand>
</feature>
<feature type="binding site" evidence="1">
    <location>
        <begin position="108"/>
        <end position="110"/>
    </location>
    <ligand>
        <name>AMP</name>
        <dbReference type="ChEBI" id="CHEBI:456215"/>
    </ligand>
</feature>
<feature type="binding site" evidence="1">
    <location>
        <begin position="137"/>
        <end position="140"/>
    </location>
    <ligand>
        <name>AMP</name>
        <dbReference type="ChEBI" id="CHEBI:456215"/>
    </ligand>
</feature>
<feature type="binding site" evidence="1">
    <location>
        <position position="144"/>
    </location>
    <ligand>
        <name>AMP</name>
        <dbReference type="ChEBI" id="CHEBI:456215"/>
    </ligand>
</feature>
<feature type="binding site" evidence="1">
    <location>
        <position position="179"/>
    </location>
    <ligand>
        <name>ATP</name>
        <dbReference type="ChEBI" id="CHEBI:30616"/>
    </ligand>
</feature>
<feature type="binding site" evidence="1">
    <location>
        <begin position="188"/>
        <end position="189"/>
    </location>
    <ligand>
        <name>ATP</name>
        <dbReference type="ChEBI" id="CHEBI:30616"/>
    </ligand>
</feature>
<feature type="binding site" evidence="1">
    <location>
        <position position="212"/>
    </location>
    <ligand>
        <name>AMP</name>
        <dbReference type="ChEBI" id="CHEBI:456215"/>
    </ligand>
</feature>
<feature type="binding site" evidence="1">
    <location>
        <position position="223"/>
    </location>
    <ligand>
        <name>AMP</name>
        <dbReference type="ChEBI" id="CHEBI:456215"/>
    </ligand>
</feature>
<feature type="binding site" evidence="1">
    <location>
        <position position="251"/>
    </location>
    <ligand>
        <name>ATP</name>
        <dbReference type="ChEBI" id="CHEBI:30616"/>
    </ligand>
</feature>
<reference key="1">
    <citation type="journal article" date="2005" name="Science">
        <title>The genome of the basidiomycetous yeast and human pathogen Cryptococcus neoformans.</title>
        <authorList>
            <person name="Loftus B.J."/>
            <person name="Fung E."/>
            <person name="Roncaglia P."/>
            <person name="Rowley D."/>
            <person name="Amedeo P."/>
            <person name="Bruno D."/>
            <person name="Vamathevan J."/>
            <person name="Miranda M."/>
            <person name="Anderson I.J."/>
            <person name="Fraser J.A."/>
            <person name="Allen J.E."/>
            <person name="Bosdet I.E."/>
            <person name="Brent M.R."/>
            <person name="Chiu R."/>
            <person name="Doering T.L."/>
            <person name="Donlin M.J."/>
            <person name="D'Souza C.A."/>
            <person name="Fox D.S."/>
            <person name="Grinberg V."/>
            <person name="Fu J."/>
            <person name="Fukushima M."/>
            <person name="Haas B.J."/>
            <person name="Huang J.C."/>
            <person name="Janbon G."/>
            <person name="Jones S.J.M."/>
            <person name="Koo H.L."/>
            <person name="Krzywinski M.I."/>
            <person name="Kwon-Chung K.J."/>
            <person name="Lengeler K.B."/>
            <person name="Maiti R."/>
            <person name="Marra M.A."/>
            <person name="Marra R.E."/>
            <person name="Mathewson C.A."/>
            <person name="Mitchell T.G."/>
            <person name="Pertea M."/>
            <person name="Riggs F.R."/>
            <person name="Salzberg S.L."/>
            <person name="Schein J.E."/>
            <person name="Shvartsbeyn A."/>
            <person name="Shin H."/>
            <person name="Shumway M."/>
            <person name="Specht C.A."/>
            <person name="Suh B.B."/>
            <person name="Tenney A."/>
            <person name="Utterback T.R."/>
            <person name="Wickes B.L."/>
            <person name="Wortman J.R."/>
            <person name="Wye N.H."/>
            <person name="Kronstad J.W."/>
            <person name="Lodge J.K."/>
            <person name="Heitman J."/>
            <person name="Davis R.W."/>
            <person name="Fraser C.M."/>
            <person name="Hyman R.W."/>
        </authorList>
    </citation>
    <scope>NUCLEOTIDE SEQUENCE [LARGE SCALE GENOMIC DNA]</scope>
    <source>
        <strain>B-3501A</strain>
    </source>
</reference>
<keyword id="KW-0067">ATP-binding</keyword>
<keyword id="KW-0963">Cytoplasm</keyword>
<keyword id="KW-0418">Kinase</keyword>
<keyword id="KW-0496">Mitochondrion</keyword>
<keyword id="KW-0547">Nucleotide-binding</keyword>
<keyword id="KW-0808">Transferase</keyword>
<sequence>MSGNSEVEYLKSLVSQLQDKIHHLEKSTSTSVSNTISSVTSALSPSSSIKPPRMVLIGPPGAGKGTQAPNISSKYCICHLATGDMLREQVARQTELGKAAKQIMDQGGLVSDEIMVGMIKQELEKNAECKNGFILDGFPRTVPQASKLDAMLAERKQAIDHAIELKIPDVLLISRITGRLVHPASGRSYHKEFNPPKKPMTDDITGEPLIQRSDDNVGTLRKRLDTYHAQTGPVVDYYKGTGVWTPVDAAQSPKLVWASISSILESKKN</sequence>